<reference key="1">
    <citation type="journal article" date="1987" name="Proc. Natl. Acad. Sci. U.S.A.">
        <title>Structure and expression of the genes, mcrBDCGA, which encode the subunits of component C of methyl coenzyme M reductase in Methanococcus vannielii.</title>
        <authorList>
            <person name="Cram D.S."/>
            <person name="Sherf B.A."/>
            <person name="Libby R.T."/>
            <person name="Mattaliano R.J."/>
            <person name="Ramachandran K.L."/>
            <person name="Reeve J.N."/>
        </authorList>
    </citation>
    <scope>NUCLEOTIDE SEQUENCE [GENOMIC DNA]</scope>
</reference>
<comment type="subunit">
    <text>MCR is composed of three subunits: alpha, beta, and gamma. The function of proteins C and D is not known.</text>
</comment>
<proteinExistence type="predicted"/>
<feature type="chain" id="PRO_0000147499" description="Methyl-coenzyme M reductase operon protein D">
    <location>
        <begin position="1"/>
        <end position="160"/>
    </location>
</feature>
<dbReference type="EMBL" id="M16893">
    <property type="protein sequence ID" value="AAA72595.1"/>
    <property type="molecule type" value="Genomic_DNA"/>
</dbReference>
<dbReference type="PIR" id="B27793">
    <property type="entry name" value="B27793"/>
</dbReference>
<dbReference type="SMR" id="P07957"/>
<dbReference type="GeneID" id="5326168"/>
<dbReference type="OMA" id="PFGYRLT"/>
<dbReference type="GO" id="GO:0015948">
    <property type="term" value="P:methanogenesis"/>
    <property type="evidence" value="ECO:0007669"/>
    <property type="project" value="UniProtKB-KW"/>
</dbReference>
<dbReference type="InterPro" id="IPR003901">
    <property type="entry name" value="Me_CoM_Rdtase_D"/>
</dbReference>
<dbReference type="NCBIfam" id="TIGR03260">
    <property type="entry name" value="met_CoM_red_D"/>
    <property type="match status" value="1"/>
</dbReference>
<dbReference type="Pfam" id="PF02505">
    <property type="entry name" value="MCR_D"/>
    <property type="match status" value="1"/>
</dbReference>
<dbReference type="PIRSF" id="PIRSF005636">
    <property type="entry name" value="McrD"/>
    <property type="match status" value="1"/>
</dbReference>
<protein>
    <recommendedName>
        <fullName>Methyl-coenzyme M reductase operon protein D</fullName>
    </recommendedName>
</protein>
<sequence length="160" mass="18120">MIELEVFPHRYLKAETTENFLNSAYSFSTVERVVIHGESLPKKVGYGPAKGSPVNHSEKKEITVKGVPVELNLQVGRLWVLLKDESEIEKIDELCKELFPFGYRLTKGKFLRDTPTVSDFIKYGESAVENIDPKLLSATDPRSKFQNSVKMIPKSENSTE</sequence>
<name>MCRD_METVA</name>
<gene>
    <name type="primary">mcrD</name>
</gene>
<organism>
    <name type="scientific">Methanococcus vannielii</name>
    <dbReference type="NCBI Taxonomy" id="2187"/>
    <lineage>
        <taxon>Archaea</taxon>
        <taxon>Methanobacteriati</taxon>
        <taxon>Methanobacteriota</taxon>
        <taxon>Methanomada group</taxon>
        <taxon>Methanococci</taxon>
        <taxon>Methanococcales</taxon>
        <taxon>Methanococcaceae</taxon>
        <taxon>Methanococcus</taxon>
    </lineage>
</organism>
<accession>P07957</accession>
<keyword id="KW-0484">Methanogenesis</keyword>